<evidence type="ECO:0000255" key="1">
    <source>
        <dbReference type="HAMAP-Rule" id="MF_00293"/>
    </source>
</evidence>
<name>PSBN_SCHCH</name>
<accession>Q8HS15</accession>
<sequence>METATLVAISISGSLVSFTGYALYTAFGQPSQQLRDPFEEHGD</sequence>
<dbReference type="EMBL" id="AY007470">
    <property type="protein sequence ID" value="AAG12393.1"/>
    <property type="molecule type" value="Genomic_DNA"/>
</dbReference>
<dbReference type="SMR" id="Q8HS15"/>
<dbReference type="GO" id="GO:0009535">
    <property type="term" value="C:chloroplast thylakoid membrane"/>
    <property type="evidence" value="ECO:0007669"/>
    <property type="project" value="UniProtKB-SubCell"/>
</dbReference>
<dbReference type="GO" id="GO:0015979">
    <property type="term" value="P:photosynthesis"/>
    <property type="evidence" value="ECO:0007669"/>
    <property type="project" value="InterPro"/>
</dbReference>
<dbReference type="HAMAP" id="MF_00293">
    <property type="entry name" value="PSII_PsbN"/>
    <property type="match status" value="1"/>
</dbReference>
<dbReference type="InterPro" id="IPR003398">
    <property type="entry name" value="PSII_PsbN"/>
</dbReference>
<dbReference type="PANTHER" id="PTHR35326">
    <property type="entry name" value="PROTEIN PSBN"/>
    <property type="match status" value="1"/>
</dbReference>
<dbReference type="PANTHER" id="PTHR35326:SF3">
    <property type="entry name" value="PROTEIN PSBN"/>
    <property type="match status" value="1"/>
</dbReference>
<dbReference type="Pfam" id="PF02468">
    <property type="entry name" value="PsbN"/>
    <property type="match status" value="1"/>
</dbReference>
<feature type="chain" id="PRO_0000207952" description="Protein PsbN">
    <location>
        <begin position="1"/>
        <end position="43"/>
    </location>
</feature>
<feature type="transmembrane region" description="Helical" evidence="1">
    <location>
        <begin position="5"/>
        <end position="27"/>
    </location>
</feature>
<comment type="function">
    <text evidence="1">May play a role in photosystem I and II biogenesis.</text>
</comment>
<comment type="subcellular location">
    <subcellularLocation>
        <location evidence="1">Plastid</location>
        <location evidence="1">Chloroplast thylakoid membrane</location>
        <topology evidence="1">Single-pass membrane protein</topology>
    </subcellularLocation>
</comment>
<comment type="similarity">
    <text evidence="1">Belongs to the PsbN family.</text>
</comment>
<comment type="caution">
    <text evidence="1">Originally thought to be a component of PSII; based on experiments in Synechocystis, N.tabacum and barley, and its absence from PSII in T.elongatus and T.vulcanus, this is probably not true.</text>
</comment>
<organism>
    <name type="scientific">Schisandra chinensis</name>
    <name type="common">Chinese magnolia vine</name>
    <name type="synonym">Kadsura chinensis</name>
    <dbReference type="NCBI Taxonomy" id="50507"/>
    <lineage>
        <taxon>Eukaryota</taxon>
        <taxon>Viridiplantae</taxon>
        <taxon>Streptophyta</taxon>
        <taxon>Embryophyta</taxon>
        <taxon>Tracheophyta</taxon>
        <taxon>Spermatophyta</taxon>
        <taxon>Magnoliopsida</taxon>
        <taxon>Austrobaileyales</taxon>
        <taxon>Schisandraceae</taxon>
        <taxon>Schisandra</taxon>
    </lineage>
</organism>
<geneLocation type="chloroplast"/>
<gene>
    <name evidence="1" type="primary">psbN</name>
</gene>
<protein>
    <recommendedName>
        <fullName evidence="1">Protein PsbN</fullName>
    </recommendedName>
</protein>
<reference key="1">
    <citation type="submission" date="2000-02" db="EMBL/GenBank/DDBJ databases">
        <title>Long branches in the seed plants and the root of the angiosperms.</title>
        <authorList>
            <person name="Graham S.W."/>
            <person name="Reeves P.A."/>
            <person name="Burns A."/>
            <person name="Olmstead R.G."/>
        </authorList>
    </citation>
    <scope>NUCLEOTIDE SEQUENCE [GENOMIC DNA]</scope>
</reference>
<keyword id="KW-0150">Chloroplast</keyword>
<keyword id="KW-0472">Membrane</keyword>
<keyword id="KW-0934">Plastid</keyword>
<keyword id="KW-0793">Thylakoid</keyword>
<keyword id="KW-0812">Transmembrane</keyword>
<keyword id="KW-1133">Transmembrane helix</keyword>
<proteinExistence type="inferred from homology"/>